<keyword id="KW-0175">Coiled coil</keyword>
<keyword id="KW-0477">Merozoite</keyword>
<keyword id="KW-1185">Reference proteome</keyword>
<proteinExistence type="evidence at protein level"/>
<comment type="biotechnology">
    <text evidence="3">Possible candidate for an effective malaria vaccine as determined by epitope response in sera.</text>
</comment>
<name>YPF10_PLAF7</name>
<evidence type="ECO:0000255" key="1"/>
<evidence type="ECO:0000256" key="2">
    <source>
        <dbReference type="SAM" id="MobiDB-lite"/>
    </source>
</evidence>
<evidence type="ECO:0000269" key="3">
    <source>
    </source>
</evidence>
<evidence type="ECO:0000305" key="4"/>
<dbReference type="EMBL" id="LN999947">
    <property type="protein sequence ID" value="CZT99415.1"/>
    <property type="molecule type" value="Genomic_DNA"/>
</dbReference>
<dbReference type="RefSeq" id="XP_024329159.1">
    <property type="nucleotide sequence ID" value="XM_024473395.1"/>
</dbReference>
<dbReference type="SMR" id="Q8I5G1"/>
<dbReference type="BioGRID" id="1206670">
    <property type="interactions" value="1"/>
</dbReference>
<dbReference type="IntAct" id="Q8I5G1">
    <property type="interactions" value="1"/>
</dbReference>
<dbReference type="PaxDb" id="5833-PFL1235c"/>
<dbReference type="EnsemblProtists" id="CZT99415">
    <property type="protein sequence ID" value="CZT99415"/>
    <property type="gene ID" value="PF3D7_1225600"/>
</dbReference>
<dbReference type="GeneID" id="811299"/>
<dbReference type="VEuPathDB" id="PlasmoDB:PF3D7_1225600"/>
<dbReference type="HOGENOM" id="CLU_328050_0_0_1"/>
<dbReference type="InParanoid" id="Q8I5G1"/>
<dbReference type="OrthoDB" id="372263at2759"/>
<dbReference type="PhylomeDB" id="Q8I5G1"/>
<dbReference type="Proteomes" id="UP000001450">
    <property type="component" value="Chromosome 12"/>
</dbReference>
<accession>Q8I5G1</accession>
<accession>A0A143ZZZ3</accession>
<gene>
    <name type="ORF">PF3D7_1225600</name>
    <name type="ORF">PFL1235c</name>
</gene>
<feature type="chain" id="PRO_0000388763" description="Uncharacterized protein PF3D7_1225600">
    <location>
        <begin position="1"/>
        <end position="781"/>
    </location>
</feature>
<feature type="region of interest" description="Disordered" evidence="2">
    <location>
        <begin position="1"/>
        <end position="27"/>
    </location>
</feature>
<feature type="region of interest" description="Disordered" evidence="2">
    <location>
        <begin position="56"/>
        <end position="268"/>
    </location>
</feature>
<feature type="coiled-coil region" evidence="1">
    <location>
        <begin position="616"/>
        <end position="655"/>
    </location>
</feature>
<feature type="compositionally biased region" description="Acidic residues" evidence="2">
    <location>
        <begin position="11"/>
        <end position="27"/>
    </location>
</feature>
<feature type="compositionally biased region" description="Basic and acidic residues" evidence="2">
    <location>
        <begin position="57"/>
        <end position="73"/>
    </location>
</feature>
<feature type="compositionally biased region" description="Basic residues" evidence="2">
    <location>
        <begin position="80"/>
        <end position="94"/>
    </location>
</feature>
<feature type="compositionally biased region" description="Acidic residues" evidence="2">
    <location>
        <begin position="99"/>
        <end position="116"/>
    </location>
</feature>
<feature type="compositionally biased region" description="Basic and acidic residues" evidence="2">
    <location>
        <begin position="123"/>
        <end position="144"/>
    </location>
</feature>
<feature type="compositionally biased region" description="Basic and acidic residues" evidence="2">
    <location>
        <begin position="170"/>
        <end position="188"/>
    </location>
</feature>
<feature type="compositionally biased region" description="Basic and acidic residues" evidence="2">
    <location>
        <begin position="216"/>
        <end position="227"/>
    </location>
</feature>
<feature type="compositionally biased region" description="Basic and acidic residues" evidence="2">
    <location>
        <begin position="251"/>
        <end position="268"/>
    </location>
</feature>
<sequence length="781" mass="93047">MKKDEKNNMDESLEEYDEENYTSELDDLPEYERELILAKRHEEYMKKKHRRMLLKNLHIDEKSKGNIHDDTNKSIETSNKRKGKLNNKKLKLKKKLYESDEEEENDKNDKNDDDQYDNTYQSDEDRKKSNNKKKEQSKKIKGDNESYNIDSISYVKYKKGKIKILEDDDEKNHEDEKKKTDIIDHVSVTDDSYTDSSYKNKKKSKYKKGDTNQTDKTSKKNKNDKTNKTNKTNVSIKTKKHREDYSDDSMDDYHSTSSYEHEKSSDVHYNKKEKKIQLKVISEESHLDNTKNKTGKGLNKILIEKEKKKKKKDLHIVDSVHKNKEDGKNVITDIFEKNEKINKDKELELPQTPERLIHLYKEEKKIKMDIYNYMTYDIITYFQLKKTFLLDMCEHVHFSYHVIGHMIKIIDISKLNKVTNQDVQNTNNKKKIDTANENKKKIFFITNVIKSEPYFSTDRNTNIKFEVAHLENLAHSKFFKKIKNIMYQNKKISMDEIKSNEYYETYICDMNNISDQKFTIDEYNHIKLFSIDLDVLKTFHLFLKEKNEDLKNFRYTEKQLQDLFEKKKQKSFYEIYTNNKSIDNLPITRITVQREICSIQREIDKLNFDKKKTNVNDTYTLSKLNNQINELTKKINILRGNLDKARKNHAAMKSNDQFAQEKNMTKEKSRTNIKSTQKDDATNKFLGVKEMDISYFSKQIYDEKTNFNNMLSSKFINLPLDVHHKVVHHFLLGTIQNNDAVFYDDPSHKIKKELDAEIDKLLGLHGNRHITLFDDIKKNYE</sequence>
<protein>
    <recommendedName>
        <fullName>Uncharacterized protein PF3D7_1225600</fullName>
    </recommendedName>
</protein>
<reference key="1">
    <citation type="journal article" date="2002" name="Nature">
        <title>Genome sequence of the human malaria parasite Plasmodium falciparum.</title>
        <authorList>
            <person name="Gardner M.J."/>
            <person name="Hall N."/>
            <person name="Fung E."/>
            <person name="White O."/>
            <person name="Berriman M."/>
            <person name="Hyman R.W."/>
            <person name="Carlton J.M."/>
            <person name="Pain A."/>
            <person name="Nelson K.E."/>
            <person name="Bowman S."/>
            <person name="Paulsen I.T."/>
            <person name="James K.D."/>
            <person name="Eisen J.A."/>
            <person name="Rutherford K.M."/>
            <person name="Salzberg S.L."/>
            <person name="Craig A."/>
            <person name="Kyes S."/>
            <person name="Chan M.-S."/>
            <person name="Nene V."/>
            <person name="Shallom S.J."/>
            <person name="Suh B."/>
            <person name="Peterson J."/>
            <person name="Angiuoli S."/>
            <person name="Pertea M."/>
            <person name="Allen J."/>
            <person name="Selengut J."/>
            <person name="Haft D."/>
            <person name="Mather M.W."/>
            <person name="Vaidya A.B."/>
            <person name="Martin D.M.A."/>
            <person name="Fairlamb A.H."/>
            <person name="Fraunholz M.J."/>
            <person name="Roos D.S."/>
            <person name="Ralph S.A."/>
            <person name="McFadden G.I."/>
            <person name="Cummings L.M."/>
            <person name="Subramanian G.M."/>
            <person name="Mungall C."/>
            <person name="Venter J.C."/>
            <person name="Carucci D.J."/>
            <person name="Hoffman S.L."/>
            <person name="Newbold C."/>
            <person name="Davis R.W."/>
            <person name="Fraser C.M."/>
            <person name="Barrell B.G."/>
        </authorList>
    </citation>
    <scope>NUCLEOTIDE SEQUENCE [LARGE SCALE GENOMIC DNA]</scope>
    <source>
        <strain>3D7</strain>
    </source>
</reference>
<reference evidence="4" key="2">
    <citation type="journal article" date="2007" name="PLoS ONE">
        <title>Rapid identification of malaria vaccine candidates based on alpha-helical coiled coil protein motif.</title>
        <authorList>
            <person name="Villard V."/>
            <person name="Agak G.W."/>
            <person name="Frank G."/>
            <person name="Jafarshad A."/>
            <person name="Servis C."/>
            <person name="Nebie I."/>
            <person name="Sirima S.B."/>
            <person name="Felger I."/>
            <person name="Arevalo-Herrera M."/>
            <person name="Herrera S."/>
            <person name="Heitz F."/>
            <person name="Baecker V."/>
            <person name="Druilhe P."/>
            <person name="Kajava A.V."/>
            <person name="Corradin G."/>
        </authorList>
    </citation>
    <scope>SYNTHESIS OF 618-647</scope>
    <scope>POSSIBLE CANDIDATE MALARIA EPITOPE</scope>
</reference>
<organism>
    <name type="scientific">Plasmodium falciparum (isolate 3D7)</name>
    <dbReference type="NCBI Taxonomy" id="36329"/>
    <lineage>
        <taxon>Eukaryota</taxon>
        <taxon>Sar</taxon>
        <taxon>Alveolata</taxon>
        <taxon>Apicomplexa</taxon>
        <taxon>Aconoidasida</taxon>
        <taxon>Haemosporida</taxon>
        <taxon>Plasmodiidae</taxon>
        <taxon>Plasmodium</taxon>
        <taxon>Plasmodium (Laverania)</taxon>
    </lineage>
</organism>